<accession>A1BHA5</accession>
<organism>
    <name type="scientific">Chlorobium phaeobacteroides (strain DSM 266 / SMG 266 / 2430)</name>
    <dbReference type="NCBI Taxonomy" id="290317"/>
    <lineage>
        <taxon>Bacteria</taxon>
        <taxon>Pseudomonadati</taxon>
        <taxon>Chlorobiota</taxon>
        <taxon>Chlorobiia</taxon>
        <taxon>Chlorobiales</taxon>
        <taxon>Chlorobiaceae</taxon>
        <taxon>Chlorobium/Pelodictyon group</taxon>
        <taxon>Chlorobium</taxon>
    </lineage>
</organism>
<gene>
    <name evidence="1" type="primary">serS</name>
    <name type="ordered locus">Cpha266_1765</name>
</gene>
<feature type="chain" id="PRO_1000019651" description="Serine--tRNA ligase">
    <location>
        <begin position="1"/>
        <end position="431"/>
    </location>
</feature>
<feature type="binding site" evidence="1">
    <location>
        <begin position="235"/>
        <end position="237"/>
    </location>
    <ligand>
        <name>L-serine</name>
        <dbReference type="ChEBI" id="CHEBI:33384"/>
    </ligand>
</feature>
<feature type="binding site" evidence="1">
    <location>
        <begin position="266"/>
        <end position="268"/>
    </location>
    <ligand>
        <name>ATP</name>
        <dbReference type="ChEBI" id="CHEBI:30616"/>
    </ligand>
</feature>
<feature type="binding site" evidence="1">
    <location>
        <position position="282"/>
    </location>
    <ligand>
        <name>ATP</name>
        <dbReference type="ChEBI" id="CHEBI:30616"/>
    </ligand>
</feature>
<feature type="binding site" evidence="1">
    <location>
        <position position="289"/>
    </location>
    <ligand>
        <name>L-serine</name>
        <dbReference type="ChEBI" id="CHEBI:33384"/>
    </ligand>
</feature>
<feature type="binding site" evidence="1">
    <location>
        <begin position="353"/>
        <end position="356"/>
    </location>
    <ligand>
        <name>ATP</name>
        <dbReference type="ChEBI" id="CHEBI:30616"/>
    </ligand>
</feature>
<feature type="binding site" evidence="1">
    <location>
        <position position="389"/>
    </location>
    <ligand>
        <name>L-serine</name>
        <dbReference type="ChEBI" id="CHEBI:33384"/>
    </ligand>
</feature>
<reference key="1">
    <citation type="submission" date="2006-12" db="EMBL/GenBank/DDBJ databases">
        <title>Complete sequence of Chlorobium phaeobacteroides DSM 266.</title>
        <authorList>
            <consortium name="US DOE Joint Genome Institute"/>
            <person name="Copeland A."/>
            <person name="Lucas S."/>
            <person name="Lapidus A."/>
            <person name="Barry K."/>
            <person name="Detter J.C."/>
            <person name="Glavina del Rio T."/>
            <person name="Hammon N."/>
            <person name="Israni S."/>
            <person name="Pitluck S."/>
            <person name="Goltsman E."/>
            <person name="Schmutz J."/>
            <person name="Larimer F."/>
            <person name="Land M."/>
            <person name="Hauser L."/>
            <person name="Mikhailova N."/>
            <person name="Li T."/>
            <person name="Overmann J."/>
            <person name="Bryant D.A."/>
            <person name="Richardson P."/>
        </authorList>
    </citation>
    <scope>NUCLEOTIDE SEQUENCE [LARGE SCALE GENOMIC DNA]</scope>
    <source>
        <strain>DSM 266 / SMG 266 / 2430</strain>
    </source>
</reference>
<dbReference type="EC" id="6.1.1.11" evidence="1"/>
<dbReference type="EMBL" id="CP000492">
    <property type="protein sequence ID" value="ABL65782.1"/>
    <property type="molecule type" value="Genomic_DNA"/>
</dbReference>
<dbReference type="RefSeq" id="WP_011745589.1">
    <property type="nucleotide sequence ID" value="NC_008639.1"/>
</dbReference>
<dbReference type="SMR" id="A1BHA5"/>
<dbReference type="STRING" id="290317.Cpha266_1765"/>
<dbReference type="KEGG" id="cph:Cpha266_1765"/>
<dbReference type="eggNOG" id="COG0172">
    <property type="taxonomic scope" value="Bacteria"/>
</dbReference>
<dbReference type="HOGENOM" id="CLU_023797_0_1_10"/>
<dbReference type="OrthoDB" id="9804647at2"/>
<dbReference type="UniPathway" id="UPA00906">
    <property type="reaction ID" value="UER00895"/>
</dbReference>
<dbReference type="Proteomes" id="UP000008701">
    <property type="component" value="Chromosome"/>
</dbReference>
<dbReference type="GO" id="GO:0005737">
    <property type="term" value="C:cytoplasm"/>
    <property type="evidence" value="ECO:0007669"/>
    <property type="project" value="UniProtKB-SubCell"/>
</dbReference>
<dbReference type="GO" id="GO:0005524">
    <property type="term" value="F:ATP binding"/>
    <property type="evidence" value="ECO:0007669"/>
    <property type="project" value="UniProtKB-UniRule"/>
</dbReference>
<dbReference type="GO" id="GO:0004828">
    <property type="term" value="F:serine-tRNA ligase activity"/>
    <property type="evidence" value="ECO:0007669"/>
    <property type="project" value="UniProtKB-UniRule"/>
</dbReference>
<dbReference type="GO" id="GO:0016260">
    <property type="term" value="P:selenocysteine biosynthetic process"/>
    <property type="evidence" value="ECO:0007669"/>
    <property type="project" value="UniProtKB-UniRule"/>
</dbReference>
<dbReference type="GO" id="GO:0006434">
    <property type="term" value="P:seryl-tRNA aminoacylation"/>
    <property type="evidence" value="ECO:0007669"/>
    <property type="project" value="UniProtKB-UniRule"/>
</dbReference>
<dbReference type="CDD" id="cd00770">
    <property type="entry name" value="SerRS_core"/>
    <property type="match status" value="1"/>
</dbReference>
<dbReference type="Gene3D" id="3.30.930.10">
    <property type="entry name" value="Bira Bifunctional Protein, Domain 2"/>
    <property type="match status" value="1"/>
</dbReference>
<dbReference type="Gene3D" id="1.10.287.40">
    <property type="entry name" value="Serine-tRNA synthetase, tRNA binding domain"/>
    <property type="match status" value="1"/>
</dbReference>
<dbReference type="HAMAP" id="MF_00176">
    <property type="entry name" value="Ser_tRNA_synth_type1"/>
    <property type="match status" value="1"/>
</dbReference>
<dbReference type="InterPro" id="IPR002314">
    <property type="entry name" value="aa-tRNA-synt_IIb"/>
</dbReference>
<dbReference type="InterPro" id="IPR006195">
    <property type="entry name" value="aa-tRNA-synth_II"/>
</dbReference>
<dbReference type="InterPro" id="IPR045864">
    <property type="entry name" value="aa-tRNA-synth_II/BPL/LPL"/>
</dbReference>
<dbReference type="InterPro" id="IPR002317">
    <property type="entry name" value="Ser-tRNA-ligase_type_1"/>
</dbReference>
<dbReference type="InterPro" id="IPR015866">
    <property type="entry name" value="Ser-tRNA-synth_1_N"/>
</dbReference>
<dbReference type="InterPro" id="IPR042103">
    <property type="entry name" value="SerRS_1_N_sf"/>
</dbReference>
<dbReference type="InterPro" id="IPR033729">
    <property type="entry name" value="SerRS_core"/>
</dbReference>
<dbReference type="InterPro" id="IPR010978">
    <property type="entry name" value="tRNA-bd_arm"/>
</dbReference>
<dbReference type="NCBIfam" id="TIGR00414">
    <property type="entry name" value="serS"/>
    <property type="match status" value="1"/>
</dbReference>
<dbReference type="PANTHER" id="PTHR43697:SF1">
    <property type="entry name" value="SERINE--TRNA LIGASE"/>
    <property type="match status" value="1"/>
</dbReference>
<dbReference type="PANTHER" id="PTHR43697">
    <property type="entry name" value="SERYL-TRNA SYNTHETASE"/>
    <property type="match status" value="1"/>
</dbReference>
<dbReference type="Pfam" id="PF02403">
    <property type="entry name" value="Seryl_tRNA_N"/>
    <property type="match status" value="1"/>
</dbReference>
<dbReference type="Pfam" id="PF00587">
    <property type="entry name" value="tRNA-synt_2b"/>
    <property type="match status" value="1"/>
</dbReference>
<dbReference type="PIRSF" id="PIRSF001529">
    <property type="entry name" value="Ser-tRNA-synth_IIa"/>
    <property type="match status" value="1"/>
</dbReference>
<dbReference type="PRINTS" id="PR00981">
    <property type="entry name" value="TRNASYNTHSER"/>
</dbReference>
<dbReference type="SUPFAM" id="SSF55681">
    <property type="entry name" value="Class II aaRS and biotin synthetases"/>
    <property type="match status" value="1"/>
</dbReference>
<dbReference type="SUPFAM" id="SSF46589">
    <property type="entry name" value="tRNA-binding arm"/>
    <property type="match status" value="1"/>
</dbReference>
<dbReference type="PROSITE" id="PS50862">
    <property type="entry name" value="AA_TRNA_LIGASE_II"/>
    <property type="match status" value="1"/>
</dbReference>
<sequence>MLDITYVRQNLAEIESMLQNRQLASEKPRLRQLLEYDKNRRELVQRSDEMKAQRNKVSKEIADIKRTGQGSGEELIRQMKEVSDEITMMDATLSKLASDIEEILLSLPNRLHESVPTGKCAEDNVICKAPVPYLHLLDFPIKNHLELGRSLGILDFERGAKISGAGFPVYIGKGARLERALINFMLDYHTDHHGFTEVFPPFFVNQESLRGTGQWPKFADQVYHIEEDNLYAIPTAEVPVTNLHRNEMIDAERLPVSYVAYSACFRREAGSYGKDTRGFLRVHQFNKVEMVKFTRPEESYQELEKILMSAEAILQALMIPYRVLLLCSGDISANATKCYDIEVWSPAEEKYLEASSCSNFEDYQARRMNIRFKADSRSKPEFVHTLNGSGLATSRLMVSLLEHYQNRDGSITIPEALRPYTGFTSIDQLTS</sequence>
<evidence type="ECO:0000255" key="1">
    <source>
        <dbReference type="HAMAP-Rule" id="MF_00176"/>
    </source>
</evidence>
<protein>
    <recommendedName>
        <fullName evidence="1">Serine--tRNA ligase</fullName>
        <ecNumber evidence="1">6.1.1.11</ecNumber>
    </recommendedName>
    <alternativeName>
        <fullName evidence="1">Seryl-tRNA synthetase</fullName>
        <shortName evidence="1">SerRS</shortName>
    </alternativeName>
    <alternativeName>
        <fullName evidence="1">Seryl-tRNA(Ser/Sec) synthetase</fullName>
    </alternativeName>
</protein>
<proteinExistence type="inferred from homology"/>
<name>SYS_CHLPD</name>
<keyword id="KW-0030">Aminoacyl-tRNA synthetase</keyword>
<keyword id="KW-0067">ATP-binding</keyword>
<keyword id="KW-0963">Cytoplasm</keyword>
<keyword id="KW-0436">Ligase</keyword>
<keyword id="KW-0547">Nucleotide-binding</keyword>
<keyword id="KW-0648">Protein biosynthesis</keyword>
<keyword id="KW-1185">Reference proteome</keyword>
<comment type="function">
    <text evidence="1">Catalyzes the attachment of serine to tRNA(Ser). Is also able to aminoacylate tRNA(Sec) with serine, to form the misacylated tRNA L-seryl-tRNA(Sec), which will be further converted into selenocysteinyl-tRNA(Sec).</text>
</comment>
<comment type="catalytic activity">
    <reaction evidence="1">
        <text>tRNA(Ser) + L-serine + ATP = L-seryl-tRNA(Ser) + AMP + diphosphate + H(+)</text>
        <dbReference type="Rhea" id="RHEA:12292"/>
        <dbReference type="Rhea" id="RHEA-COMP:9669"/>
        <dbReference type="Rhea" id="RHEA-COMP:9703"/>
        <dbReference type="ChEBI" id="CHEBI:15378"/>
        <dbReference type="ChEBI" id="CHEBI:30616"/>
        <dbReference type="ChEBI" id="CHEBI:33019"/>
        <dbReference type="ChEBI" id="CHEBI:33384"/>
        <dbReference type="ChEBI" id="CHEBI:78442"/>
        <dbReference type="ChEBI" id="CHEBI:78533"/>
        <dbReference type="ChEBI" id="CHEBI:456215"/>
        <dbReference type="EC" id="6.1.1.11"/>
    </reaction>
</comment>
<comment type="catalytic activity">
    <reaction evidence="1">
        <text>tRNA(Sec) + L-serine + ATP = L-seryl-tRNA(Sec) + AMP + diphosphate + H(+)</text>
        <dbReference type="Rhea" id="RHEA:42580"/>
        <dbReference type="Rhea" id="RHEA-COMP:9742"/>
        <dbReference type="Rhea" id="RHEA-COMP:10128"/>
        <dbReference type="ChEBI" id="CHEBI:15378"/>
        <dbReference type="ChEBI" id="CHEBI:30616"/>
        <dbReference type="ChEBI" id="CHEBI:33019"/>
        <dbReference type="ChEBI" id="CHEBI:33384"/>
        <dbReference type="ChEBI" id="CHEBI:78442"/>
        <dbReference type="ChEBI" id="CHEBI:78533"/>
        <dbReference type="ChEBI" id="CHEBI:456215"/>
        <dbReference type="EC" id="6.1.1.11"/>
    </reaction>
</comment>
<comment type="pathway">
    <text evidence="1">Aminoacyl-tRNA biosynthesis; selenocysteinyl-tRNA(Sec) biosynthesis; L-seryl-tRNA(Sec) from L-serine and tRNA(Sec): step 1/1.</text>
</comment>
<comment type="subunit">
    <text evidence="1">Homodimer. The tRNA molecule binds across the dimer.</text>
</comment>
<comment type="subcellular location">
    <subcellularLocation>
        <location evidence="1">Cytoplasm</location>
    </subcellularLocation>
</comment>
<comment type="domain">
    <text evidence="1">Consists of two distinct domains, a catalytic core and a N-terminal extension that is involved in tRNA binding.</text>
</comment>
<comment type="similarity">
    <text evidence="1">Belongs to the class-II aminoacyl-tRNA synthetase family. Type-1 seryl-tRNA synthetase subfamily.</text>
</comment>